<sequence length="258" mass="28608">MVLIRVLANLVMLHLSYGEKSSELVIGGRPCNINQHRSLALLYNSSGFLCGGTLINQQWVLSAAHCDMENMQIYLGLHNFSLPNMDQKRRVAEEKFFCLSNKSYTKWDKDIMLIKLNRRVKTSTHIAPLSLPSNPPRLRSVCRIMGWGSITSPRETLPYVPHCANIMILRYWVCRAIYGSLPAKSRTLCAGVPRRRIGSCLGDSGGPLICNGQIQGIASWGSDPCVNHGAPGVYTKVFDYNDWIQSIIAGNTAATCPP</sequence>
<protein>
    <recommendedName>
        <fullName>Alpha-fibrinogenase</fullName>
        <shortName>VLAF</shortName>
        <ecNumber>3.4.21.-</ecNumber>
    </recommendedName>
    <alternativeName>
        <fullName>Snake venom serine protease</fullName>
        <shortName>SVSP</shortName>
    </alternativeName>
</protein>
<name>VSPA_MACLB</name>
<evidence type="ECO:0000250" key="1"/>
<evidence type="ECO:0000255" key="2"/>
<evidence type="ECO:0000255" key="3">
    <source>
        <dbReference type="PROSITE-ProRule" id="PRU00274"/>
    </source>
</evidence>
<evidence type="ECO:0000269" key="4">
    <source>
    </source>
</evidence>
<evidence type="ECO:0000269" key="5">
    <source>
    </source>
</evidence>
<evidence type="ECO:0000269" key="6">
    <source>
    </source>
</evidence>
<evidence type="ECO:0000269" key="7">
    <source>
    </source>
</evidence>
<evidence type="ECO:0000305" key="8">
    <source>
    </source>
</evidence>
<feature type="signal peptide" evidence="2">
    <location>
        <begin position="1"/>
        <end position="18"/>
    </location>
</feature>
<feature type="propeptide" id="PRO_0000295003" evidence="4">
    <location>
        <begin position="19"/>
        <end position="24"/>
    </location>
</feature>
<feature type="chain" id="PRO_0000295004" description="Alpha-fibrinogenase">
    <location>
        <begin position="25"/>
        <end position="258"/>
    </location>
</feature>
<feature type="domain" description="Peptidase S1" evidence="3">
    <location>
        <begin position="25"/>
        <end position="249"/>
    </location>
</feature>
<feature type="active site" description="Charge relay system" evidence="1">
    <location>
        <position position="65"/>
    </location>
</feature>
<feature type="active site" description="Charge relay system" evidence="1">
    <location>
        <position position="110"/>
    </location>
</feature>
<feature type="active site" description="Charge relay system" evidence="1">
    <location>
        <position position="204"/>
    </location>
</feature>
<feature type="glycosylation site" description="N-linked (GlcNAc...) asparagine" evidence="2">
    <location>
        <position position="44"/>
    </location>
</feature>
<feature type="glycosylation site" description="N-linked (GlcNAc...) asparagine" evidence="2">
    <location>
        <position position="79"/>
    </location>
</feature>
<feature type="glycosylation site" description="N-linked (GlcNAc...) asparagine" evidence="2">
    <location>
        <position position="101"/>
    </location>
</feature>
<feature type="disulfide bond" evidence="3">
    <location>
        <begin position="31"/>
        <end position="163"/>
    </location>
</feature>
<feature type="disulfide bond" evidence="3">
    <location>
        <begin position="50"/>
        <end position="66"/>
    </location>
</feature>
<feature type="disulfide bond" evidence="3">
    <location>
        <begin position="98"/>
        <end position="256"/>
    </location>
</feature>
<feature type="disulfide bond" evidence="3">
    <location>
        <begin position="142"/>
        <end position="210"/>
    </location>
</feature>
<feature type="disulfide bond" evidence="3">
    <location>
        <begin position="174"/>
        <end position="189"/>
    </location>
</feature>
<feature type="disulfide bond" evidence="3">
    <location>
        <begin position="200"/>
        <end position="225"/>
    </location>
</feature>
<reference key="1">
    <citation type="journal article" date="2003" name="Thromb. Haemost.">
        <title>Anticoagulant serine fibrinogenases from Vipera lebetina venom: structure-function relationships.</title>
        <authorList>
            <person name="Siigur E."/>
            <person name="Aaspollu A."/>
            <person name="Siigur J."/>
        </authorList>
    </citation>
    <scope>NUCLEOTIDE SEQUENCE [MRNA]</scope>
    <source>
        <tissue>Venom gland</tissue>
    </source>
</reference>
<reference key="2">
    <citation type="journal article" date="2002" name="Toxicon">
        <title>Biochemical characterization of fibrinogenolytic serine proteinases from Vipera lebetina snake venom.</title>
        <authorList>
            <person name="Samel M."/>
            <person name="Subbi J."/>
            <person name="Siigur J."/>
            <person name="Siigur E."/>
        </authorList>
    </citation>
    <scope>PROTEIN SEQUENCE OF 25-43</scope>
    <scope>GLYCOSYLATION</scope>
    <scope>SIALIC ACID CONTENT</scope>
    <scope>IDENTIFICATION BY MASS SPECTROMETRY</scope>
    <source>
        <tissue>Venom</tissue>
    </source>
</reference>
<reference key="3">
    <citation type="journal article" date="2001" name="Haemostasis">
        <title>Proteases from Vipera lebetina venom affecting coagulation and fibrinolysis.</title>
        <authorList>
            <person name="Siigur J."/>
            <person name="Aaspollu A."/>
            <person name="Tonismagi K."/>
            <person name="Trummal K."/>
            <person name="Samel M."/>
            <person name="Vija H."/>
            <person name="Subbi J."/>
            <person name="Siigur E."/>
        </authorList>
    </citation>
    <scope>FUNCTION</scope>
</reference>
<reference key="4">
    <citation type="journal article" date="1987" name="Biochim. Biophys. Acta">
        <title>Purification and properties of a proteinase from Vipera lebetina (snake) venom.</title>
        <authorList>
            <person name="Mahar A."/>
            <person name="Siigur E."/>
            <person name="Siigur J."/>
        </authorList>
    </citation>
    <scope>FUNCTION</scope>
    <scope>SUBUNIT</scope>
    <scope>ACTIVITY REGULATION</scope>
    <source>
        <tissue>Venom</tissue>
    </source>
</reference>
<organism>
    <name type="scientific">Macrovipera lebetinus</name>
    <name type="common">Levantine viper</name>
    <name type="synonym">Vipera lebetina</name>
    <dbReference type="NCBI Taxonomy" id="3148341"/>
    <lineage>
        <taxon>Eukaryota</taxon>
        <taxon>Metazoa</taxon>
        <taxon>Chordata</taxon>
        <taxon>Craniata</taxon>
        <taxon>Vertebrata</taxon>
        <taxon>Euteleostomi</taxon>
        <taxon>Lepidosauria</taxon>
        <taxon>Squamata</taxon>
        <taxon>Bifurcata</taxon>
        <taxon>Unidentata</taxon>
        <taxon>Episquamata</taxon>
        <taxon>Toxicofera</taxon>
        <taxon>Serpentes</taxon>
        <taxon>Colubroidea</taxon>
        <taxon>Viperidae</taxon>
        <taxon>Viperinae</taxon>
        <taxon>Macrovipera</taxon>
    </lineage>
</organism>
<comment type="function">
    <text evidence="5 7">Degrades alpha chain of fibrinogen (FGA), and has strong caseinolytic activity. Cleaves oxidized insulin B-chain at '40-Tyr-|-Leu-41', '48-Phe-|-Phe-49' and '49-Phe-|-Tyr-50', and glucagon at the bonds '62-Tyr-|-Ser-63', 66-Leu-|-Asp-67' and '78-Leu-|-Met-79' bonds.</text>
</comment>
<comment type="activity regulation">
    <text evidence="7">Inhibited by diisopropylfluorophosphate (DFP) and PMSF, and partially by soybean trypsin inhibitor, but not by EDTA.</text>
</comment>
<comment type="subunit">
    <text evidence="7">Monomer.</text>
</comment>
<comment type="subcellular location">
    <subcellularLocation>
        <location>Secreted</location>
    </subcellularLocation>
</comment>
<comment type="tissue specificity">
    <text>Expressed by the venom gland.</text>
</comment>
<comment type="PTM">
    <text evidence="4">Glycosylated. Contains 8.5% of hexoses, 5.8% of hexosamines and 0.8% of sialic acids.</text>
</comment>
<comment type="mass spectrometry" mass="31100.0" method="MALDI" evidence="6"/>
<comment type="miscellaneous">
    <text evidence="8">Lacks esterolytic activity.</text>
</comment>
<comment type="similarity">
    <text evidence="3">Belongs to the peptidase S1 family. Snake venom subfamily.</text>
</comment>
<dbReference type="EC" id="3.4.21.-"/>
<dbReference type="EMBL" id="AF528193">
    <property type="protein sequence ID" value="AAM96674.1"/>
    <property type="molecule type" value="mRNA"/>
</dbReference>
<dbReference type="SMR" id="Q8JH85"/>
<dbReference type="MEROPS" id="S01.334"/>
<dbReference type="BRENDA" id="3.4.21.74">
    <property type="organism ID" value="6665"/>
</dbReference>
<dbReference type="GO" id="GO:0005576">
    <property type="term" value="C:extracellular region"/>
    <property type="evidence" value="ECO:0007669"/>
    <property type="project" value="UniProtKB-SubCell"/>
</dbReference>
<dbReference type="GO" id="GO:0030141">
    <property type="term" value="C:secretory granule"/>
    <property type="evidence" value="ECO:0007669"/>
    <property type="project" value="TreeGrafter"/>
</dbReference>
<dbReference type="GO" id="GO:0004252">
    <property type="term" value="F:serine-type endopeptidase activity"/>
    <property type="evidence" value="ECO:0007669"/>
    <property type="project" value="InterPro"/>
</dbReference>
<dbReference type="GO" id="GO:0090729">
    <property type="term" value="F:toxin activity"/>
    <property type="evidence" value="ECO:0007669"/>
    <property type="project" value="UniProtKB-KW"/>
</dbReference>
<dbReference type="GO" id="GO:0006508">
    <property type="term" value="P:proteolysis"/>
    <property type="evidence" value="ECO:0007669"/>
    <property type="project" value="UniProtKB-KW"/>
</dbReference>
<dbReference type="CDD" id="cd00190">
    <property type="entry name" value="Tryp_SPc"/>
    <property type="match status" value="1"/>
</dbReference>
<dbReference type="FunFam" id="2.40.10.10:FF:000010">
    <property type="entry name" value="Kallikrein related peptidase 11"/>
    <property type="match status" value="1"/>
</dbReference>
<dbReference type="Gene3D" id="2.40.10.10">
    <property type="entry name" value="Trypsin-like serine proteases"/>
    <property type="match status" value="2"/>
</dbReference>
<dbReference type="InterPro" id="IPR009003">
    <property type="entry name" value="Peptidase_S1_PA"/>
</dbReference>
<dbReference type="InterPro" id="IPR043504">
    <property type="entry name" value="Peptidase_S1_PA_chymotrypsin"/>
</dbReference>
<dbReference type="InterPro" id="IPR001314">
    <property type="entry name" value="Peptidase_S1A"/>
</dbReference>
<dbReference type="InterPro" id="IPR001254">
    <property type="entry name" value="Trypsin_dom"/>
</dbReference>
<dbReference type="InterPro" id="IPR018114">
    <property type="entry name" value="TRYPSIN_HIS"/>
</dbReference>
<dbReference type="InterPro" id="IPR033116">
    <property type="entry name" value="TRYPSIN_SER"/>
</dbReference>
<dbReference type="PANTHER" id="PTHR24271:SF47">
    <property type="entry name" value="KALLIKREIN-1"/>
    <property type="match status" value="1"/>
</dbReference>
<dbReference type="PANTHER" id="PTHR24271">
    <property type="entry name" value="KALLIKREIN-RELATED"/>
    <property type="match status" value="1"/>
</dbReference>
<dbReference type="Pfam" id="PF00089">
    <property type="entry name" value="Trypsin"/>
    <property type="match status" value="1"/>
</dbReference>
<dbReference type="PRINTS" id="PR00722">
    <property type="entry name" value="CHYMOTRYPSIN"/>
</dbReference>
<dbReference type="SMART" id="SM00020">
    <property type="entry name" value="Tryp_SPc"/>
    <property type="match status" value="1"/>
</dbReference>
<dbReference type="SUPFAM" id="SSF50494">
    <property type="entry name" value="Trypsin-like serine proteases"/>
    <property type="match status" value="1"/>
</dbReference>
<dbReference type="PROSITE" id="PS50240">
    <property type="entry name" value="TRYPSIN_DOM"/>
    <property type="match status" value="1"/>
</dbReference>
<dbReference type="PROSITE" id="PS00134">
    <property type="entry name" value="TRYPSIN_HIS"/>
    <property type="match status" value="1"/>
</dbReference>
<dbReference type="PROSITE" id="PS00135">
    <property type="entry name" value="TRYPSIN_SER"/>
    <property type="match status" value="1"/>
</dbReference>
<accession>Q8JH85</accession>
<proteinExistence type="evidence at protein level"/>
<keyword id="KW-0903">Direct protein sequencing</keyword>
<keyword id="KW-1015">Disulfide bond</keyword>
<keyword id="KW-1206">Fibrinogenolytic toxin</keyword>
<keyword id="KW-0325">Glycoprotein</keyword>
<keyword id="KW-1199">Hemostasis impairing toxin</keyword>
<keyword id="KW-0378">Hydrolase</keyword>
<keyword id="KW-0645">Protease</keyword>
<keyword id="KW-0964">Secreted</keyword>
<keyword id="KW-0720">Serine protease</keyword>
<keyword id="KW-0730">Sialic acid</keyword>
<keyword id="KW-0732">Signal</keyword>
<keyword id="KW-0800">Toxin</keyword>
<keyword id="KW-0865">Zymogen</keyword>